<organism>
    <name type="scientific">Salmonella gallinarum (strain 287/91 / NCTC 13346)</name>
    <dbReference type="NCBI Taxonomy" id="550538"/>
    <lineage>
        <taxon>Bacteria</taxon>
        <taxon>Pseudomonadati</taxon>
        <taxon>Pseudomonadota</taxon>
        <taxon>Gammaproteobacteria</taxon>
        <taxon>Enterobacterales</taxon>
        <taxon>Enterobacteriaceae</taxon>
        <taxon>Salmonella</taxon>
    </lineage>
</organism>
<reference key="1">
    <citation type="journal article" date="2008" name="Genome Res.">
        <title>Comparative genome analysis of Salmonella enteritidis PT4 and Salmonella gallinarum 287/91 provides insights into evolutionary and host adaptation pathways.</title>
        <authorList>
            <person name="Thomson N.R."/>
            <person name="Clayton D.J."/>
            <person name="Windhorst D."/>
            <person name="Vernikos G."/>
            <person name="Davidson S."/>
            <person name="Churcher C."/>
            <person name="Quail M.A."/>
            <person name="Stevens M."/>
            <person name="Jones M.A."/>
            <person name="Watson M."/>
            <person name="Barron A."/>
            <person name="Layton A."/>
            <person name="Pickard D."/>
            <person name="Kingsley R.A."/>
            <person name="Bignell A."/>
            <person name="Clark L."/>
            <person name="Harris B."/>
            <person name="Ormond D."/>
            <person name="Abdellah Z."/>
            <person name="Brooks K."/>
            <person name="Cherevach I."/>
            <person name="Chillingworth T."/>
            <person name="Woodward J."/>
            <person name="Norberczak H."/>
            <person name="Lord A."/>
            <person name="Arrowsmith C."/>
            <person name="Jagels K."/>
            <person name="Moule S."/>
            <person name="Mungall K."/>
            <person name="Saunders M."/>
            <person name="Whitehead S."/>
            <person name="Chabalgoity J.A."/>
            <person name="Maskell D."/>
            <person name="Humphreys T."/>
            <person name="Roberts M."/>
            <person name="Barrow P.A."/>
            <person name="Dougan G."/>
            <person name="Parkhill J."/>
        </authorList>
    </citation>
    <scope>NUCLEOTIDE SEQUENCE [LARGE SCALE GENOMIC DNA]</scope>
    <source>
        <strain>287/91 / NCTC 13346</strain>
    </source>
</reference>
<gene>
    <name evidence="1" type="primary">gcvT</name>
    <name type="ordered locus">SG2950</name>
</gene>
<dbReference type="EC" id="2.1.2.10" evidence="1"/>
<dbReference type="EMBL" id="AM933173">
    <property type="protein sequence ID" value="CAR38755.1"/>
    <property type="molecule type" value="Genomic_DNA"/>
</dbReference>
<dbReference type="RefSeq" id="WP_000068731.1">
    <property type="nucleotide sequence ID" value="NC_011274.1"/>
</dbReference>
<dbReference type="SMR" id="B5RE16"/>
<dbReference type="KEGG" id="seg:SG2950"/>
<dbReference type="HOGENOM" id="CLU_007884_10_2_6"/>
<dbReference type="Proteomes" id="UP000008321">
    <property type="component" value="Chromosome"/>
</dbReference>
<dbReference type="GO" id="GO:0005829">
    <property type="term" value="C:cytosol"/>
    <property type="evidence" value="ECO:0007669"/>
    <property type="project" value="TreeGrafter"/>
</dbReference>
<dbReference type="GO" id="GO:0005960">
    <property type="term" value="C:glycine cleavage complex"/>
    <property type="evidence" value="ECO:0007669"/>
    <property type="project" value="InterPro"/>
</dbReference>
<dbReference type="GO" id="GO:0004047">
    <property type="term" value="F:aminomethyltransferase activity"/>
    <property type="evidence" value="ECO:0007669"/>
    <property type="project" value="UniProtKB-UniRule"/>
</dbReference>
<dbReference type="GO" id="GO:0008483">
    <property type="term" value="F:transaminase activity"/>
    <property type="evidence" value="ECO:0007669"/>
    <property type="project" value="UniProtKB-KW"/>
</dbReference>
<dbReference type="GO" id="GO:0019464">
    <property type="term" value="P:glycine decarboxylation via glycine cleavage system"/>
    <property type="evidence" value="ECO:0007669"/>
    <property type="project" value="UniProtKB-UniRule"/>
</dbReference>
<dbReference type="FunFam" id="2.40.30.110:FF:000001">
    <property type="entry name" value="Aminomethyltransferase"/>
    <property type="match status" value="1"/>
</dbReference>
<dbReference type="FunFam" id="3.30.70.1400:FF:000001">
    <property type="entry name" value="Aminomethyltransferase"/>
    <property type="match status" value="1"/>
</dbReference>
<dbReference type="FunFam" id="4.10.1250.10:FF:000001">
    <property type="entry name" value="Aminomethyltransferase"/>
    <property type="match status" value="1"/>
</dbReference>
<dbReference type="Gene3D" id="2.40.30.110">
    <property type="entry name" value="Aminomethyltransferase beta-barrel domains"/>
    <property type="match status" value="1"/>
</dbReference>
<dbReference type="Gene3D" id="3.30.70.1400">
    <property type="entry name" value="Aminomethyltransferase beta-barrel domains"/>
    <property type="match status" value="1"/>
</dbReference>
<dbReference type="Gene3D" id="4.10.1250.10">
    <property type="entry name" value="Aminomethyltransferase fragment"/>
    <property type="match status" value="1"/>
</dbReference>
<dbReference type="Gene3D" id="3.30.1360.120">
    <property type="entry name" value="Probable tRNA modification gtpase trme, domain 1"/>
    <property type="match status" value="1"/>
</dbReference>
<dbReference type="HAMAP" id="MF_00259">
    <property type="entry name" value="GcvT"/>
    <property type="match status" value="1"/>
</dbReference>
<dbReference type="InterPro" id="IPR006223">
    <property type="entry name" value="GCS_T"/>
</dbReference>
<dbReference type="InterPro" id="IPR022903">
    <property type="entry name" value="GCS_T_bac"/>
</dbReference>
<dbReference type="InterPro" id="IPR013977">
    <property type="entry name" value="GCST_C"/>
</dbReference>
<dbReference type="InterPro" id="IPR006222">
    <property type="entry name" value="GCV_T_N"/>
</dbReference>
<dbReference type="InterPro" id="IPR028896">
    <property type="entry name" value="GcvT/YgfZ/DmdA"/>
</dbReference>
<dbReference type="InterPro" id="IPR029043">
    <property type="entry name" value="GcvT/YgfZ_C"/>
</dbReference>
<dbReference type="InterPro" id="IPR027266">
    <property type="entry name" value="TrmE/GcvT_dom1"/>
</dbReference>
<dbReference type="NCBIfam" id="TIGR00528">
    <property type="entry name" value="gcvT"/>
    <property type="match status" value="1"/>
</dbReference>
<dbReference type="NCBIfam" id="NF001567">
    <property type="entry name" value="PRK00389.1"/>
    <property type="match status" value="1"/>
</dbReference>
<dbReference type="PANTHER" id="PTHR43757">
    <property type="entry name" value="AMINOMETHYLTRANSFERASE"/>
    <property type="match status" value="1"/>
</dbReference>
<dbReference type="PANTHER" id="PTHR43757:SF2">
    <property type="entry name" value="AMINOMETHYLTRANSFERASE, MITOCHONDRIAL"/>
    <property type="match status" value="1"/>
</dbReference>
<dbReference type="Pfam" id="PF01571">
    <property type="entry name" value="GCV_T"/>
    <property type="match status" value="1"/>
</dbReference>
<dbReference type="Pfam" id="PF08669">
    <property type="entry name" value="GCV_T_C"/>
    <property type="match status" value="1"/>
</dbReference>
<dbReference type="PIRSF" id="PIRSF006487">
    <property type="entry name" value="GcvT"/>
    <property type="match status" value="1"/>
</dbReference>
<dbReference type="SUPFAM" id="SSF101790">
    <property type="entry name" value="Aminomethyltransferase beta-barrel domain"/>
    <property type="match status" value="1"/>
</dbReference>
<dbReference type="SUPFAM" id="SSF103025">
    <property type="entry name" value="Folate-binding domain"/>
    <property type="match status" value="1"/>
</dbReference>
<comment type="function">
    <text evidence="1">The glycine cleavage system catalyzes the degradation of glycine.</text>
</comment>
<comment type="catalytic activity">
    <reaction evidence="1">
        <text>N(6)-[(R)-S(8)-aminomethyldihydrolipoyl]-L-lysyl-[protein] + (6S)-5,6,7,8-tetrahydrofolate = N(6)-[(R)-dihydrolipoyl]-L-lysyl-[protein] + (6R)-5,10-methylene-5,6,7,8-tetrahydrofolate + NH4(+)</text>
        <dbReference type="Rhea" id="RHEA:16945"/>
        <dbReference type="Rhea" id="RHEA-COMP:10475"/>
        <dbReference type="Rhea" id="RHEA-COMP:10492"/>
        <dbReference type="ChEBI" id="CHEBI:15636"/>
        <dbReference type="ChEBI" id="CHEBI:28938"/>
        <dbReference type="ChEBI" id="CHEBI:57453"/>
        <dbReference type="ChEBI" id="CHEBI:83100"/>
        <dbReference type="ChEBI" id="CHEBI:83143"/>
        <dbReference type="EC" id="2.1.2.10"/>
    </reaction>
</comment>
<comment type="subunit">
    <text evidence="1">The glycine cleavage system is composed of four proteins: P, T, L and H.</text>
</comment>
<comment type="similarity">
    <text evidence="1">Belongs to the GcvT family.</text>
</comment>
<keyword id="KW-0032">Aminotransferase</keyword>
<keyword id="KW-0808">Transferase</keyword>
<feature type="chain" id="PRO_1000114112" description="Aminomethyltransferase">
    <location>
        <begin position="1"/>
        <end position="364"/>
    </location>
</feature>
<evidence type="ECO:0000255" key="1">
    <source>
        <dbReference type="HAMAP-Rule" id="MF_00259"/>
    </source>
</evidence>
<protein>
    <recommendedName>
        <fullName evidence="1">Aminomethyltransferase</fullName>
        <ecNumber evidence="1">2.1.2.10</ecNumber>
    </recommendedName>
    <alternativeName>
        <fullName evidence="1">Glycine cleavage system T protein</fullName>
    </alternativeName>
</protein>
<accession>B5RE16</accession>
<name>GCST_SALG2</name>
<proteinExistence type="inferred from homology"/>
<sequence>MAQQTPLYEQHTLCGARMVDFHGWMMPLHYGSQLDEHHAVRTDAGMFDVSHMTIVDLHGSRTREFLRYLLANDVAKLTKTGKALYSGMLNASGGVIDDLIIYYFTEDFFRLVVNSATREKDLSWITQHAEPYAIDITVRDDLSLIAVQGPNAQEKAATLFTDEQRHAVEGMKPFFGVQVGDLFIATTGYTGEAGYEIAMPNEKAADFWRALVEAGVKPCGLGARDTLRLEAGMNLYGQEMDEGISPLAANMGWTIAWEPADRDFIGREALEMQREKGHEQLVGLVMTEKGVLRNELPVRFTDAQGNQQEGIITSGTFSPTLGYSIALARVPAGIGETAIVQIRNREMPVKVTKPVFVRNGKAVA</sequence>